<dbReference type="EC" id="5.1.1.7" evidence="1"/>
<dbReference type="EMBL" id="CP000436">
    <property type="protein sequence ID" value="ABI25878.1"/>
    <property type="molecule type" value="Genomic_DNA"/>
</dbReference>
<dbReference type="SMR" id="Q0I572"/>
<dbReference type="KEGG" id="hso:HS_1610"/>
<dbReference type="eggNOG" id="COG0253">
    <property type="taxonomic scope" value="Bacteria"/>
</dbReference>
<dbReference type="HOGENOM" id="CLU_053306_1_1_6"/>
<dbReference type="UniPathway" id="UPA00034">
    <property type="reaction ID" value="UER00025"/>
</dbReference>
<dbReference type="GO" id="GO:0005829">
    <property type="term" value="C:cytosol"/>
    <property type="evidence" value="ECO:0007669"/>
    <property type="project" value="TreeGrafter"/>
</dbReference>
<dbReference type="GO" id="GO:0008837">
    <property type="term" value="F:diaminopimelate epimerase activity"/>
    <property type="evidence" value="ECO:0007669"/>
    <property type="project" value="UniProtKB-UniRule"/>
</dbReference>
<dbReference type="GO" id="GO:0009089">
    <property type="term" value="P:lysine biosynthetic process via diaminopimelate"/>
    <property type="evidence" value="ECO:0007669"/>
    <property type="project" value="UniProtKB-UniRule"/>
</dbReference>
<dbReference type="FunFam" id="3.10.310.10:FF:000001">
    <property type="entry name" value="Diaminopimelate epimerase"/>
    <property type="match status" value="1"/>
</dbReference>
<dbReference type="FunFam" id="3.10.310.10:FF:000002">
    <property type="entry name" value="Diaminopimelate epimerase"/>
    <property type="match status" value="1"/>
</dbReference>
<dbReference type="Gene3D" id="3.10.310.10">
    <property type="entry name" value="Diaminopimelate Epimerase, Chain A, domain 1"/>
    <property type="match status" value="2"/>
</dbReference>
<dbReference type="HAMAP" id="MF_00197">
    <property type="entry name" value="DAP_epimerase"/>
    <property type="match status" value="1"/>
</dbReference>
<dbReference type="InterPro" id="IPR018510">
    <property type="entry name" value="DAP_epimerase_AS"/>
</dbReference>
<dbReference type="InterPro" id="IPR001653">
    <property type="entry name" value="DAP_epimerase_DapF"/>
</dbReference>
<dbReference type="NCBIfam" id="TIGR00652">
    <property type="entry name" value="DapF"/>
    <property type="match status" value="1"/>
</dbReference>
<dbReference type="PANTHER" id="PTHR31689:SF0">
    <property type="entry name" value="DIAMINOPIMELATE EPIMERASE"/>
    <property type="match status" value="1"/>
</dbReference>
<dbReference type="PANTHER" id="PTHR31689">
    <property type="entry name" value="DIAMINOPIMELATE EPIMERASE, CHLOROPLASTIC"/>
    <property type="match status" value="1"/>
</dbReference>
<dbReference type="Pfam" id="PF01678">
    <property type="entry name" value="DAP_epimerase"/>
    <property type="match status" value="2"/>
</dbReference>
<dbReference type="SUPFAM" id="SSF54506">
    <property type="entry name" value="Diaminopimelate epimerase-like"/>
    <property type="match status" value="1"/>
</dbReference>
<dbReference type="PROSITE" id="PS01326">
    <property type="entry name" value="DAP_EPIMERASE"/>
    <property type="match status" value="1"/>
</dbReference>
<name>DAPF_HISS1</name>
<organism>
    <name type="scientific">Histophilus somni (strain 129Pt)</name>
    <name type="common">Haemophilus somnus</name>
    <dbReference type="NCBI Taxonomy" id="205914"/>
    <lineage>
        <taxon>Bacteria</taxon>
        <taxon>Pseudomonadati</taxon>
        <taxon>Pseudomonadota</taxon>
        <taxon>Gammaproteobacteria</taxon>
        <taxon>Pasteurellales</taxon>
        <taxon>Pasteurellaceae</taxon>
        <taxon>Histophilus</taxon>
    </lineage>
</organism>
<accession>Q0I572</accession>
<reference key="1">
    <citation type="journal article" date="2007" name="J. Bacteriol.">
        <title>Complete genome sequence of Haemophilus somnus (Histophilus somni) strain 129Pt and comparison to Haemophilus ducreyi 35000HP and Haemophilus influenzae Rd.</title>
        <authorList>
            <person name="Challacombe J.F."/>
            <person name="Duncan A.J."/>
            <person name="Brettin T.S."/>
            <person name="Bruce D."/>
            <person name="Chertkov O."/>
            <person name="Detter J.C."/>
            <person name="Han C.S."/>
            <person name="Misra M."/>
            <person name="Richardson P."/>
            <person name="Tapia R."/>
            <person name="Thayer N."/>
            <person name="Xie G."/>
            <person name="Inzana T.J."/>
        </authorList>
    </citation>
    <scope>NUCLEOTIDE SEQUENCE [LARGE SCALE GENOMIC DNA]</scope>
    <source>
        <strain>129Pt</strain>
    </source>
</reference>
<keyword id="KW-0028">Amino-acid biosynthesis</keyword>
<keyword id="KW-0963">Cytoplasm</keyword>
<keyword id="KW-0413">Isomerase</keyword>
<keyword id="KW-0457">Lysine biosynthesis</keyword>
<evidence type="ECO:0000255" key="1">
    <source>
        <dbReference type="HAMAP-Rule" id="MF_00197"/>
    </source>
</evidence>
<sequence>MQFSKMHGLGNDFVVVDAVTQNVYFPTEVIKRLADRNRGIGFDQLLVVEPPYDPDLDFHYRIFNADGSEVSQCGNGARCFARFVVLKGLTDKKEIAVSTAKGKMMLRVKDDDMVCVNMGEPIWEPNKIPFNANKFEKNYIIRTDIQTLLCGVVSMGNPHCVTQVEDIQHANIEILGPLLESHERFPERVNAGFMQIINRNHIKLRVYERGAGETQACGSGACAAVAVGIMQGVLDNNVQVDLPGGRLMIEWQGKGHPLYMTGEATHIYDGVIRL</sequence>
<gene>
    <name evidence="1" type="primary">dapF</name>
    <name type="ordered locus">HS_1610</name>
</gene>
<comment type="function">
    <text evidence="1">Catalyzes the stereoinversion of LL-2,6-diaminopimelate (L,L-DAP) to meso-diaminopimelate (meso-DAP), a precursor of L-lysine and an essential component of the bacterial peptidoglycan.</text>
</comment>
<comment type="catalytic activity">
    <reaction evidence="1">
        <text>(2S,6S)-2,6-diaminopimelate = meso-2,6-diaminopimelate</text>
        <dbReference type="Rhea" id="RHEA:15393"/>
        <dbReference type="ChEBI" id="CHEBI:57609"/>
        <dbReference type="ChEBI" id="CHEBI:57791"/>
        <dbReference type="EC" id="5.1.1.7"/>
    </reaction>
</comment>
<comment type="pathway">
    <text evidence="1">Amino-acid biosynthesis; L-lysine biosynthesis via DAP pathway; DL-2,6-diaminopimelate from LL-2,6-diaminopimelate: step 1/1.</text>
</comment>
<comment type="subunit">
    <text evidence="1">Homodimer.</text>
</comment>
<comment type="subcellular location">
    <subcellularLocation>
        <location evidence="1">Cytoplasm</location>
    </subcellularLocation>
</comment>
<comment type="similarity">
    <text evidence="1">Belongs to the diaminopimelate epimerase family.</text>
</comment>
<protein>
    <recommendedName>
        <fullName evidence="1">Diaminopimelate epimerase</fullName>
        <shortName evidence="1">DAP epimerase</shortName>
        <ecNumber evidence="1">5.1.1.7</ecNumber>
    </recommendedName>
    <alternativeName>
        <fullName evidence="1">PLP-independent amino acid racemase</fullName>
    </alternativeName>
</protein>
<proteinExistence type="inferred from homology"/>
<feature type="chain" id="PRO_1000011887" description="Diaminopimelate epimerase">
    <location>
        <begin position="1"/>
        <end position="274"/>
    </location>
</feature>
<feature type="active site" description="Proton donor" evidence="1">
    <location>
        <position position="73"/>
    </location>
</feature>
<feature type="active site" description="Proton acceptor" evidence="1">
    <location>
        <position position="217"/>
    </location>
</feature>
<feature type="binding site" evidence="1">
    <location>
        <position position="11"/>
    </location>
    <ligand>
        <name>substrate</name>
    </ligand>
</feature>
<feature type="binding site" evidence="1">
    <location>
        <position position="44"/>
    </location>
    <ligand>
        <name>substrate</name>
    </ligand>
</feature>
<feature type="binding site" evidence="1">
    <location>
        <position position="64"/>
    </location>
    <ligand>
        <name>substrate</name>
    </ligand>
</feature>
<feature type="binding site" evidence="1">
    <location>
        <begin position="74"/>
        <end position="75"/>
    </location>
    <ligand>
        <name>substrate</name>
    </ligand>
</feature>
<feature type="binding site" evidence="1">
    <location>
        <position position="157"/>
    </location>
    <ligand>
        <name>substrate</name>
    </ligand>
</feature>
<feature type="binding site" evidence="1">
    <location>
        <position position="190"/>
    </location>
    <ligand>
        <name>substrate</name>
    </ligand>
</feature>
<feature type="binding site" evidence="1">
    <location>
        <begin position="208"/>
        <end position="209"/>
    </location>
    <ligand>
        <name>substrate</name>
    </ligand>
</feature>
<feature type="binding site" evidence="1">
    <location>
        <begin position="218"/>
        <end position="219"/>
    </location>
    <ligand>
        <name>substrate</name>
    </ligand>
</feature>
<feature type="site" description="Could be important to modulate the pK values of the two catalytic cysteine residues" evidence="1">
    <location>
        <position position="159"/>
    </location>
</feature>
<feature type="site" description="Could be important to modulate the pK values of the two catalytic cysteine residues" evidence="1">
    <location>
        <position position="208"/>
    </location>
</feature>
<feature type="site" description="Important for dimerization" evidence="1">
    <location>
        <position position="268"/>
    </location>
</feature>